<gene>
    <name type="primary">MYC</name>
</gene>
<sequence length="439" mass="48683">MPLNVSFANRNYDLDYDSMQPYFFCDEEENFYHQQQQSELQPPAPSEDIWKKFELLPTPPLSPSRRSGLCSPSYVAFASFSPRDVDDGGGGSFSTADQLEMVTELLGGDMVNQSFICDPDDETFIKNIIIQDCMWSGFSAAAKLVSEKLASYQAARKDGGGRSPARGQGACSTSSLYLQDLSAAVSECIDPSVVFPYPLNDSSSPKPCASPDSTAFSPSSDSLLSSAASSPRASPEPLALHEETPPTTSSDSEEEQEDEEEIDVVSVEKRQPPAKRSESGSPSAGSHSKPPHSPLVLKRCHVSTHQHNYAAPPSTRKDYPPTKRAKLDSGRVLKQISNNRKCASPRSSDSEENDKRRTHNVLERQRRNELKRSFFALRDQIPELENNEKAPKVVILKKATAYILAIQAEEQKLISEKDLLRKRREQLKHKLEQLRNSCA</sequence>
<organism>
    <name type="scientific">Tadarida brasiliensis</name>
    <name type="common">Brazilian free-tailed bat</name>
    <dbReference type="NCBI Taxonomy" id="9438"/>
    <lineage>
        <taxon>Eukaryota</taxon>
        <taxon>Metazoa</taxon>
        <taxon>Chordata</taxon>
        <taxon>Craniata</taxon>
        <taxon>Vertebrata</taxon>
        <taxon>Euteleostomi</taxon>
        <taxon>Mammalia</taxon>
        <taxon>Eutheria</taxon>
        <taxon>Laurasiatheria</taxon>
        <taxon>Chiroptera</taxon>
        <taxon>Yangochiroptera</taxon>
        <taxon>Molossidae</taxon>
        <taxon>Tadarida</taxon>
    </lineage>
</organism>
<dbReference type="EMBL" id="AF160489">
    <property type="protein sequence ID" value="AAF80396.1"/>
    <property type="molecule type" value="Genomic_DNA"/>
</dbReference>
<dbReference type="EMBL" id="AF160488">
    <property type="protein sequence ID" value="AAF80396.1"/>
    <property type="status" value="JOINED"/>
    <property type="molecule type" value="Genomic_DNA"/>
</dbReference>
<dbReference type="SMR" id="Q9MZT7"/>
<dbReference type="GlyCosmos" id="Q9MZT7">
    <property type="glycosylation" value="1 site, No reported glycans"/>
</dbReference>
<dbReference type="GO" id="GO:0005737">
    <property type="term" value="C:cytoplasm"/>
    <property type="evidence" value="ECO:0007669"/>
    <property type="project" value="UniProtKB-SubCell"/>
</dbReference>
<dbReference type="GO" id="GO:0005730">
    <property type="term" value="C:nucleolus"/>
    <property type="evidence" value="ECO:0000250"/>
    <property type="project" value="UniProtKB"/>
</dbReference>
<dbReference type="GO" id="GO:0005654">
    <property type="term" value="C:nucleoplasm"/>
    <property type="evidence" value="ECO:0000250"/>
    <property type="project" value="UniProtKB"/>
</dbReference>
<dbReference type="GO" id="GO:0000981">
    <property type="term" value="F:DNA-binding transcription factor activity, RNA polymerase II-specific"/>
    <property type="evidence" value="ECO:0000250"/>
    <property type="project" value="UniProtKB"/>
</dbReference>
<dbReference type="GO" id="GO:0070888">
    <property type="term" value="F:E-box binding"/>
    <property type="evidence" value="ECO:0000250"/>
    <property type="project" value="UniProtKB"/>
</dbReference>
<dbReference type="GO" id="GO:0046983">
    <property type="term" value="F:protein dimerization activity"/>
    <property type="evidence" value="ECO:0007669"/>
    <property type="project" value="InterPro"/>
</dbReference>
<dbReference type="GO" id="GO:0044877">
    <property type="term" value="F:protein-containing complex binding"/>
    <property type="evidence" value="ECO:0000250"/>
    <property type="project" value="UniProtKB"/>
</dbReference>
<dbReference type="GO" id="GO:0006338">
    <property type="term" value="P:chromatin remodeling"/>
    <property type="evidence" value="ECO:0000250"/>
    <property type="project" value="UniProtKB"/>
</dbReference>
<dbReference type="GO" id="GO:0051276">
    <property type="term" value="P:chromosome organization"/>
    <property type="evidence" value="ECO:0000250"/>
    <property type="project" value="UniProtKB"/>
</dbReference>
<dbReference type="GO" id="GO:0006974">
    <property type="term" value="P:DNA damage response"/>
    <property type="evidence" value="ECO:0000250"/>
    <property type="project" value="UniProtKB"/>
</dbReference>
<dbReference type="GO" id="GO:0000082">
    <property type="term" value="P:G1/S transition of mitotic cell cycle"/>
    <property type="evidence" value="ECO:0000250"/>
    <property type="project" value="UniProtKB"/>
</dbReference>
<dbReference type="GO" id="GO:0006879">
    <property type="term" value="P:intracellular iron ion homeostasis"/>
    <property type="evidence" value="ECO:0000250"/>
    <property type="project" value="UniProtKB"/>
</dbReference>
<dbReference type="GO" id="GO:0000165">
    <property type="term" value="P:MAPK cascade"/>
    <property type="evidence" value="ECO:0000250"/>
    <property type="project" value="UniProtKB"/>
</dbReference>
<dbReference type="GO" id="GO:0051782">
    <property type="term" value="P:negative regulation of cell division"/>
    <property type="evidence" value="ECO:0000250"/>
    <property type="project" value="UniProtKB"/>
</dbReference>
<dbReference type="GO" id="GO:0045656">
    <property type="term" value="P:negative regulation of monocyte differentiation"/>
    <property type="evidence" value="ECO:0000250"/>
    <property type="project" value="UniProtKB"/>
</dbReference>
<dbReference type="GO" id="GO:0045893">
    <property type="term" value="P:positive regulation of DNA-templated transcription"/>
    <property type="evidence" value="ECO:0000250"/>
    <property type="project" value="UniProtKB"/>
</dbReference>
<dbReference type="GO" id="GO:0050679">
    <property type="term" value="P:positive regulation of epithelial cell proliferation"/>
    <property type="evidence" value="ECO:0000250"/>
    <property type="project" value="UniProtKB"/>
</dbReference>
<dbReference type="GO" id="GO:0048146">
    <property type="term" value="P:positive regulation of fibroblast proliferation"/>
    <property type="evidence" value="ECO:0000250"/>
    <property type="project" value="UniProtKB"/>
</dbReference>
<dbReference type="GO" id="GO:0045944">
    <property type="term" value="P:positive regulation of transcription by RNA polymerase II"/>
    <property type="evidence" value="ECO:0000250"/>
    <property type="project" value="UniProtKB"/>
</dbReference>
<dbReference type="GO" id="GO:0006355">
    <property type="term" value="P:regulation of DNA-templated transcription"/>
    <property type="evidence" value="ECO:0000250"/>
    <property type="project" value="UniProtKB"/>
</dbReference>
<dbReference type="GO" id="GO:1904672">
    <property type="term" value="P:regulation of somatic stem cell population maintenance"/>
    <property type="evidence" value="ECO:0000250"/>
    <property type="project" value="UniProtKB"/>
</dbReference>
<dbReference type="GO" id="GO:0032204">
    <property type="term" value="P:regulation of telomere maintenance"/>
    <property type="evidence" value="ECO:0000250"/>
    <property type="project" value="UniProtKB"/>
</dbReference>
<dbReference type="GO" id="GO:0016072">
    <property type="term" value="P:rRNA metabolic process"/>
    <property type="evidence" value="ECO:0000250"/>
    <property type="project" value="UniProtKB"/>
</dbReference>
<dbReference type="CDD" id="cd11458">
    <property type="entry name" value="bHLHzip_c-Myc"/>
    <property type="match status" value="1"/>
</dbReference>
<dbReference type="FunFam" id="4.10.280.10:FF:000019">
    <property type="entry name" value="Myc proto-oncogene protein"/>
    <property type="match status" value="1"/>
</dbReference>
<dbReference type="Gene3D" id="4.10.280.10">
    <property type="entry name" value="Helix-loop-helix DNA-binding domain"/>
    <property type="match status" value="1"/>
</dbReference>
<dbReference type="InterPro" id="IPR011598">
    <property type="entry name" value="bHLH_dom"/>
</dbReference>
<dbReference type="InterPro" id="IPR036638">
    <property type="entry name" value="HLH_DNA-bd_sf"/>
</dbReference>
<dbReference type="InterPro" id="IPR003327">
    <property type="entry name" value="Myc-LZ"/>
</dbReference>
<dbReference type="InterPro" id="IPR050433">
    <property type="entry name" value="Myc_transcription_factors"/>
</dbReference>
<dbReference type="InterPro" id="IPR002418">
    <property type="entry name" value="Tscrpt_reg_Myc"/>
</dbReference>
<dbReference type="InterPro" id="IPR012682">
    <property type="entry name" value="Tscrpt_reg_Myc_N"/>
</dbReference>
<dbReference type="PANTHER" id="PTHR45851">
    <property type="entry name" value="MYC PROTO-ONCOGENE"/>
    <property type="match status" value="1"/>
</dbReference>
<dbReference type="Pfam" id="PF00010">
    <property type="entry name" value="HLH"/>
    <property type="match status" value="1"/>
</dbReference>
<dbReference type="Pfam" id="PF02344">
    <property type="entry name" value="Myc-LZ"/>
    <property type="match status" value="1"/>
</dbReference>
<dbReference type="Pfam" id="PF01056">
    <property type="entry name" value="Myc_N"/>
    <property type="match status" value="1"/>
</dbReference>
<dbReference type="PIRSF" id="PIRSF001705">
    <property type="entry name" value="Myc_protein"/>
    <property type="match status" value="1"/>
</dbReference>
<dbReference type="PRINTS" id="PR00044">
    <property type="entry name" value="LEUZIPPRMYC"/>
</dbReference>
<dbReference type="SMART" id="SM00353">
    <property type="entry name" value="HLH"/>
    <property type="match status" value="1"/>
</dbReference>
<dbReference type="SUPFAM" id="SSF47459">
    <property type="entry name" value="HLH, helix-loop-helix DNA-binding domain"/>
    <property type="match status" value="1"/>
</dbReference>
<dbReference type="PROSITE" id="PS50888">
    <property type="entry name" value="BHLH"/>
    <property type="match status" value="1"/>
</dbReference>
<accession>Q9MZT7</accession>
<protein>
    <recommendedName>
        <fullName>Myc proto-oncogene protein</fullName>
    </recommendedName>
    <alternativeName>
        <fullName>Proto-oncogene c-Myc</fullName>
    </alternativeName>
    <alternativeName>
        <fullName>Transcription factor p64</fullName>
    </alternativeName>
</protein>
<evidence type="ECO:0000250" key="1"/>
<evidence type="ECO:0000250" key="2">
    <source>
        <dbReference type="UniProtKB" id="P01106"/>
    </source>
</evidence>
<evidence type="ECO:0000250" key="3">
    <source>
        <dbReference type="UniProtKB" id="P01108"/>
    </source>
</evidence>
<evidence type="ECO:0000255" key="4">
    <source>
        <dbReference type="PROSITE-ProRule" id="PRU00981"/>
    </source>
</evidence>
<evidence type="ECO:0000256" key="5">
    <source>
        <dbReference type="SAM" id="MobiDB-lite"/>
    </source>
</evidence>
<keyword id="KW-0007">Acetylation</keyword>
<keyword id="KW-0010">Activator</keyword>
<keyword id="KW-0158">Chromosome</keyword>
<keyword id="KW-0963">Cytoplasm</keyword>
<keyword id="KW-0238">DNA-binding</keyword>
<keyword id="KW-0325">Glycoprotein</keyword>
<keyword id="KW-1017">Isopeptide bond</keyword>
<keyword id="KW-0539">Nucleus</keyword>
<keyword id="KW-0597">Phosphoprotein</keyword>
<keyword id="KW-0656">Proto-oncogene</keyword>
<keyword id="KW-0804">Transcription</keyword>
<keyword id="KW-0805">Transcription regulation</keyword>
<keyword id="KW-0832">Ubl conjugation</keyword>
<comment type="function">
    <text evidence="2 3">Transcription factor that binds DNA in a non-specific manner, yet also specifically recognizes the core sequence 5'-CAC[GA]TG-3'. Activates the transcription of growth-related genes. Binds to the VEGFA promoter, promoting VEGFA production and subsequent sprouting angiogenesis. Regulator of somatic reprogramming, controls self-renewal of embryonic stem cells. Functions with TAF6L to activate target gene expression through RNA polymerase II pause release (By similarity). Positively regulates transcription of HNRNPA1, HNRNPA2 and PTBP1 which in turn regulate splicing of pyruvate kinase PKM by binding repressively to sequences flanking PKM exon 9, inhibiting exon 9 inclusion and resulting in exon 10 inclusion and production of the PKM M2 isoform (By similarity).</text>
</comment>
<comment type="subunit">
    <text evidence="2 3">Efficient DNA binding requires dimerization with another bHLH protein. Binds DNA as a heterodimer with MAX (By similarity). Interacts with TAF1C and SPAG9. Interacts with PARP10. Interacts with KDM5A and KDM5B. Interacts (when phosphorylated at Thr-58 and Ser-62) with FBXW7. Interacts with PIM2. Interacts with RIOX1. The heterodimer MYC:MAX interacts with ABI1; the interaction may enhance MYC:MAX transcriptional activity. Interacts with TRIM6 (By similarity). Interacts with NPM1; the binary complex is recruited to the promoter of MYC target genes and enhances their transcription (By similarity). Interacts with NUP205 (By similarity). Interacts with HEATR1; the interaction is required for localization of MYC to the nucleolus (By similarity).</text>
</comment>
<comment type="subcellular location">
    <subcellularLocation>
        <location evidence="2">Nucleus</location>
        <location evidence="2">Nucleoplasm</location>
    </subcellularLocation>
    <subcellularLocation>
        <location evidence="2">Nucleus</location>
        <location evidence="2">Nucleolus</location>
    </subcellularLocation>
    <subcellularLocation>
        <location evidence="2">Nucleus</location>
    </subcellularLocation>
    <subcellularLocation>
        <location evidence="2">Cytoplasm</location>
    </subcellularLocation>
    <subcellularLocation>
        <location evidence="2">Chromosome</location>
    </subcellularLocation>
    <text evidence="2">Association with chromatin is reduced by hyperphosphorylation. Localization to the nucleolus is dependent on HEATR1.</text>
</comment>
<comment type="domain">
    <text evidence="2">The 9aaTAD motif is a transactivation domain present in a large number of yeast and animal transcription factors.</text>
</comment>
<comment type="PTM">
    <text evidence="2 3">Phosphorylated by PRKDC (By similarity). Phosphorylation at Ser-329 by PIM2 leads to the stabilization of MYC (By similarity). Phosphorylation at Ser-62 by CDK2 prevents Ras-induced senescence. Phosphorylated at Ser-62 by DYRK2; this primes the protein for subsequent phosphorylation by GSK3B at Thr-58. Phosphorylation at Thr-58 and Ser-62 by GSK3 is required for ubiquitination and degradation by the proteasome. Dephosphorylation at multiple sites by the PNUTS-PP1 complex promotes MYC stability by preventing ubiquitination by the SCF(FBXW7) complex. Dephosphorylation at Ser-62 by protein phosphatase 2A (PPP2CA) promotes its degradation; interaction with PPP2CA is enhanced by AMBRA1 (By similarity).</text>
</comment>
<comment type="PTM">
    <text evidence="2 3">Ubiquitinated by the SCF(FBXW7) complex when phosphorylated at Thr-58 and Ser-62, leading to its degradation by the proteasome. Ubiquitination is counteracted by USP28 in the nucleoplasm and USP36 in the nucleolus, both interacting with of FBXW7, leading to its deubiquitination and preventing degradation. Also polyubiquitinated by the DCX(TRPC4AP) complex. Ubiquitinated by UBR5 when not forming a heterodimer with another bHLH protein, leading to its degradation: UBR5 recognizes and binds a degron that is only available upon heterodimer dissociation (By similarity). Ubiquitinated by TRIM6 in a phosphorylation-independent manner.</text>
</comment>
<feature type="chain" id="PRO_0000127303" description="Myc proto-oncogene protein">
    <location>
        <begin position="1"/>
        <end position="439"/>
    </location>
</feature>
<feature type="domain" description="bHLH" evidence="4">
    <location>
        <begin position="354"/>
        <end position="406"/>
    </location>
</feature>
<feature type="region of interest" description="Disordered" evidence="5">
    <location>
        <begin position="201"/>
        <end position="360"/>
    </location>
</feature>
<feature type="region of interest" description="Leucine-zipper">
    <location>
        <begin position="413"/>
        <end position="434"/>
    </location>
</feature>
<feature type="short sequence motif" description="9aaTAD" evidence="2">
    <location>
        <begin position="100"/>
        <end position="108"/>
    </location>
</feature>
<feature type="short sequence motif" description="UBR5-degron" evidence="2">
    <location>
        <begin position="355"/>
        <end position="364"/>
    </location>
</feature>
<feature type="compositionally biased region" description="Low complexity" evidence="5">
    <location>
        <begin position="209"/>
        <end position="238"/>
    </location>
</feature>
<feature type="compositionally biased region" description="Acidic residues" evidence="5">
    <location>
        <begin position="251"/>
        <end position="263"/>
    </location>
</feature>
<feature type="compositionally biased region" description="Basic and acidic residues" evidence="5">
    <location>
        <begin position="266"/>
        <end position="278"/>
    </location>
</feature>
<feature type="compositionally biased region" description="Low complexity" evidence="5">
    <location>
        <begin position="279"/>
        <end position="288"/>
    </location>
</feature>
<feature type="compositionally biased region" description="Basic and acidic residues" evidence="5">
    <location>
        <begin position="315"/>
        <end position="331"/>
    </location>
</feature>
<feature type="compositionally biased region" description="Polar residues" evidence="5">
    <location>
        <begin position="335"/>
        <end position="347"/>
    </location>
</feature>
<feature type="modified residue" description="Phosphoserine" evidence="2">
    <location>
        <position position="6"/>
    </location>
</feature>
<feature type="modified residue" description="Phosphothreonine; by GSK3; alternate" evidence="2">
    <location>
        <position position="58"/>
    </location>
</feature>
<feature type="modified residue" description="Phosphoserine; by DYRK2, GSK3 and CDK2" evidence="2">
    <location>
        <position position="62"/>
    </location>
</feature>
<feature type="modified residue" description="Phosphoserine" evidence="2">
    <location>
        <position position="71"/>
    </location>
</feature>
<feature type="modified residue" description="Phosphoserine" evidence="2">
    <location>
        <position position="81"/>
    </location>
</feature>
<feature type="modified residue" description="N6-acetyllysine; by PCAF; alternate" evidence="2">
    <location>
        <position position="143"/>
    </location>
</feature>
<feature type="modified residue" description="N6-acetyllysine; alternate" evidence="2">
    <location>
        <position position="148"/>
    </location>
</feature>
<feature type="modified residue" description="Phosphoserine" evidence="2">
    <location>
        <position position="151"/>
    </location>
</feature>
<feature type="modified residue" description="N6-acetyllysine; by PCAF" evidence="2">
    <location>
        <position position="157"/>
    </location>
</feature>
<feature type="modified residue" description="N6-acetyllysine; by PCAF" evidence="2">
    <location>
        <position position="275"/>
    </location>
</feature>
<feature type="modified residue" description="Phosphoserine" evidence="2">
    <location>
        <position position="293"/>
    </location>
</feature>
<feature type="modified residue" description="Phosphoserine" evidence="2">
    <location>
        <position position="314"/>
    </location>
</feature>
<feature type="modified residue" description="Phosphothreonine" evidence="2">
    <location>
        <position position="315"/>
    </location>
</feature>
<feature type="modified residue" description="N6-acetyllysine; by PCAF" evidence="2">
    <location>
        <position position="317"/>
    </location>
</feature>
<feature type="modified residue" description="N6-acetyllysine; by PCAF" evidence="2">
    <location>
        <position position="323"/>
    </location>
</feature>
<feature type="modified residue" description="Phosphoserine; by PIM2; in vitro" evidence="3">
    <location>
        <position position="329"/>
    </location>
</feature>
<feature type="modified residue" description="Phosphoserine" evidence="2">
    <location>
        <position position="344"/>
    </location>
</feature>
<feature type="modified residue" description="Phosphoserine" evidence="2">
    <location>
        <position position="347"/>
    </location>
</feature>
<feature type="modified residue" description="Phosphoserine" evidence="2">
    <location>
        <position position="348"/>
    </location>
</feature>
<feature type="modified residue" description="N6-acetyllysine; by PCAF" evidence="2">
    <location>
        <position position="371"/>
    </location>
</feature>
<feature type="glycosylation site" description="O-linked (GlcNAc) threonine; alternate" evidence="1">
    <location>
        <position position="58"/>
    </location>
</feature>
<feature type="cross-link" description="Glycyl lysine isopeptide (Lys-Gly) (interchain with G-Cter in SUMO2)" evidence="2">
    <location>
        <position position="52"/>
    </location>
</feature>
<feature type="cross-link" description="Glycyl lysine isopeptide (Lys-Gly) (interchain with G-Cter in SUMO2); alternate" evidence="2">
    <location>
        <position position="143"/>
    </location>
</feature>
<feature type="cross-link" description="Glycyl lysine isopeptide (Lys-Gly) (interchain with G-Cter in SUMO2); alternate" evidence="2">
    <location>
        <position position="148"/>
    </location>
</feature>
<feature type="cross-link" description="Glycyl lysine isopeptide (Lys-Gly) (interchain with G-Cter in SUMO2)" evidence="2">
    <location>
        <position position="298"/>
    </location>
</feature>
<proteinExistence type="inferred from homology"/>
<name>MYC_TADBR</name>
<reference key="1">
    <citation type="journal article" date="2000" name="Syst. Biol.">
        <title>c-myc gene sequences and the phylogeny of bats and other eutherian mammals.</title>
        <authorList>
            <person name="Miyamoto M.M."/>
            <person name="Porter C.A."/>
            <person name="Goodman M."/>
        </authorList>
    </citation>
    <scope>NUCLEOTIDE SEQUENCE [GENOMIC DNA]</scope>
</reference>